<accession>A2T348</accession>
<gene>
    <name evidence="1" type="primary">psbL</name>
</gene>
<comment type="function">
    <text evidence="1">One of the components of the core complex of photosystem II (PSII). PSII is a light-driven water:plastoquinone oxidoreductase that uses light energy to abstract electrons from H(2)O, generating O(2) and a proton gradient subsequently used for ATP formation. It consists of a core antenna complex that captures photons, and an electron transfer chain that converts photonic excitation into a charge separation. This subunit is found at the monomer-monomer interface and is required for correct PSII assembly and/or dimerization.</text>
</comment>
<comment type="subunit">
    <text evidence="1">PSII is composed of 1 copy each of membrane proteins PsbA, PsbB, PsbC, PsbD, PsbE, PsbF, PsbH, PsbI, PsbJ, PsbK, PsbL, PsbM, PsbT, PsbX, PsbY, PsbZ, Psb30/Ycf12, at least 3 peripheral proteins of the oxygen-evolving complex and a large number of cofactors. It forms dimeric complexes.</text>
</comment>
<comment type="subcellular location">
    <subcellularLocation>
        <location evidence="1">Plastid</location>
        <location evidence="1">Chloroplast thylakoid membrane</location>
        <topology evidence="1">Single-pass membrane protein</topology>
    </subcellularLocation>
</comment>
<comment type="similarity">
    <text evidence="1">Belongs to the PsbL family.</text>
</comment>
<proteinExistence type="inferred from homology"/>
<dbReference type="EMBL" id="DQ821119">
    <property type="protein sequence ID" value="ABG79615.1"/>
    <property type="molecule type" value="Genomic_DNA"/>
</dbReference>
<dbReference type="RefSeq" id="YP_001023716.1">
    <property type="nucleotide sequence ID" value="NC_008829.1"/>
</dbReference>
<dbReference type="SMR" id="A2T348"/>
<dbReference type="GeneID" id="4788145"/>
<dbReference type="GO" id="GO:0009535">
    <property type="term" value="C:chloroplast thylakoid membrane"/>
    <property type="evidence" value="ECO:0007669"/>
    <property type="project" value="UniProtKB-SubCell"/>
</dbReference>
<dbReference type="GO" id="GO:0009539">
    <property type="term" value="C:photosystem II reaction center"/>
    <property type="evidence" value="ECO:0007669"/>
    <property type="project" value="InterPro"/>
</dbReference>
<dbReference type="GO" id="GO:0015979">
    <property type="term" value="P:photosynthesis"/>
    <property type="evidence" value="ECO:0007669"/>
    <property type="project" value="UniProtKB-UniRule"/>
</dbReference>
<dbReference type="HAMAP" id="MF_01317">
    <property type="entry name" value="PSII_PsbL"/>
    <property type="match status" value="1"/>
</dbReference>
<dbReference type="InterPro" id="IPR003372">
    <property type="entry name" value="PSII_PsbL"/>
</dbReference>
<dbReference type="InterPro" id="IPR037266">
    <property type="entry name" value="PSII_PsbL_sf"/>
</dbReference>
<dbReference type="NCBIfam" id="NF001972">
    <property type="entry name" value="PRK00753.1"/>
    <property type="match status" value="1"/>
</dbReference>
<dbReference type="Pfam" id="PF02419">
    <property type="entry name" value="PsbL"/>
    <property type="match status" value="1"/>
</dbReference>
<dbReference type="SUPFAM" id="SSF161017">
    <property type="entry name" value="Photosystem II reaction center protein L, PsbL"/>
    <property type="match status" value="1"/>
</dbReference>
<sequence length="38" mass="4493">MTQPNPNKQTVELNRTSLYWGLLLIFVLAVLFSNYFFN</sequence>
<geneLocation type="chloroplast"/>
<keyword id="KW-0150">Chloroplast</keyword>
<keyword id="KW-0472">Membrane</keyword>
<keyword id="KW-0602">Photosynthesis</keyword>
<keyword id="KW-0604">Photosystem II</keyword>
<keyword id="KW-0934">Plastid</keyword>
<keyword id="KW-0674">Reaction center</keyword>
<keyword id="KW-0793">Thylakoid</keyword>
<keyword id="KW-0812">Transmembrane</keyword>
<keyword id="KW-1133">Transmembrane helix</keyword>
<protein>
    <recommendedName>
        <fullName evidence="1">Photosystem II reaction center protein L</fullName>
        <shortName evidence="1">PSII-L</shortName>
    </recommendedName>
</protein>
<feature type="chain" id="PRO_0000306221" description="Photosystem II reaction center protein L">
    <location>
        <begin position="1"/>
        <end position="38"/>
    </location>
</feature>
<feature type="transmembrane region" description="Helical" evidence="1">
    <location>
        <begin position="17"/>
        <end position="37"/>
    </location>
</feature>
<name>PSBL_ANGEV</name>
<organism>
    <name type="scientific">Angiopteris evecta</name>
    <name type="common">Mule's foot fern</name>
    <name type="synonym">Polypodium evectum</name>
    <dbReference type="NCBI Taxonomy" id="13825"/>
    <lineage>
        <taxon>Eukaryota</taxon>
        <taxon>Viridiplantae</taxon>
        <taxon>Streptophyta</taxon>
        <taxon>Embryophyta</taxon>
        <taxon>Tracheophyta</taxon>
        <taxon>Polypodiopsida</taxon>
        <taxon>Marattiidae</taxon>
        <taxon>Marattiales</taxon>
        <taxon>Marattiaceae</taxon>
        <taxon>Angiopteris</taxon>
    </lineage>
</organism>
<reference key="1">
    <citation type="journal article" date="2007" name="Am. Fern J.">
        <title>The complete plastid genome sequence of Angiopteris evecta (G. Forst.) Hoffm. (Marattiaceae).</title>
        <authorList>
            <person name="Roper J.M."/>
            <person name="Hansen S.K."/>
            <person name="Wolf P.G."/>
            <person name="Karol K.G."/>
            <person name="Mandoli D.F."/>
            <person name="Everett K.D.E."/>
            <person name="Kuehl J.V."/>
            <person name="Boore J.L."/>
        </authorList>
    </citation>
    <scope>NUCLEOTIDE SEQUENCE [LARGE SCALE GENOMIC DNA]</scope>
</reference>
<evidence type="ECO:0000255" key="1">
    <source>
        <dbReference type="HAMAP-Rule" id="MF_01317"/>
    </source>
</evidence>